<name>PUS10_METV3</name>
<keyword id="KW-0413">Isomerase</keyword>
<keyword id="KW-1185">Reference proteome</keyword>
<keyword id="KW-0694">RNA-binding</keyword>
<keyword id="KW-0819">tRNA processing</keyword>
<feature type="chain" id="PRO_0000407388" description="tRNA pseudouridine synthase Pus10">
    <location>
        <begin position="1"/>
        <end position="519"/>
    </location>
</feature>
<feature type="domain" description="THUMP" evidence="1">
    <location>
        <begin position="144"/>
        <end position="265"/>
    </location>
</feature>
<feature type="region of interest" description="Disordered" evidence="2">
    <location>
        <begin position="70"/>
        <end position="98"/>
    </location>
</feature>
<feature type="compositionally biased region" description="Basic and acidic residues" evidence="2">
    <location>
        <begin position="77"/>
        <end position="98"/>
    </location>
</feature>
<feature type="active site" description="Nucleophile" evidence="1">
    <location>
        <position position="334"/>
    </location>
</feature>
<feature type="binding site" evidence="1">
    <location>
        <position position="398"/>
    </location>
    <ligand>
        <name>substrate</name>
    </ligand>
</feature>
<feature type="binding site" evidence="1">
    <location>
        <position position="476"/>
    </location>
    <ligand>
        <name>substrate</name>
    </ligand>
</feature>
<accession>D7DQH5</accession>
<evidence type="ECO:0000255" key="1">
    <source>
        <dbReference type="HAMAP-Rule" id="MF_01893"/>
    </source>
</evidence>
<evidence type="ECO:0000256" key="2">
    <source>
        <dbReference type="SAM" id="MobiDB-lite"/>
    </source>
</evidence>
<comment type="function">
    <text evidence="1">Responsible for synthesis of pseudouridine from uracil-54 and uracil-55 in the psi GC loop of transfer RNAs.</text>
</comment>
<comment type="catalytic activity">
    <reaction evidence="1">
        <text>uridine(54) in tRNA = pseudouridine(54) in tRNA</text>
        <dbReference type="Rhea" id="RHEA:57876"/>
        <dbReference type="Rhea" id="RHEA-COMP:10193"/>
        <dbReference type="Rhea" id="RHEA-COMP:14141"/>
        <dbReference type="ChEBI" id="CHEBI:65314"/>
        <dbReference type="ChEBI" id="CHEBI:65315"/>
    </reaction>
</comment>
<comment type="catalytic activity">
    <reaction evidence="1">
        <text>uridine(55) in tRNA = pseudouridine(55) in tRNA</text>
        <dbReference type="Rhea" id="RHEA:42532"/>
        <dbReference type="Rhea" id="RHEA-COMP:10101"/>
        <dbReference type="Rhea" id="RHEA-COMP:10102"/>
        <dbReference type="ChEBI" id="CHEBI:65314"/>
        <dbReference type="ChEBI" id="CHEBI:65315"/>
        <dbReference type="EC" id="5.4.99.25"/>
    </reaction>
</comment>
<comment type="similarity">
    <text evidence="1">Belongs to the pseudouridine synthase Pus10 family.</text>
</comment>
<reference key="1">
    <citation type="submission" date="2010-05" db="EMBL/GenBank/DDBJ databases">
        <title>Complete sequence of Methanococcus voltae A3.</title>
        <authorList>
            <consortium name="US DOE Joint Genome Institute"/>
            <person name="Lucas S."/>
            <person name="Copeland A."/>
            <person name="Lapidus A."/>
            <person name="Cheng J.-F."/>
            <person name="Bruce D."/>
            <person name="Goodwin L."/>
            <person name="Pitluck S."/>
            <person name="Lowry S."/>
            <person name="Clum A."/>
            <person name="Land M."/>
            <person name="Hauser L."/>
            <person name="Kyrpides N."/>
            <person name="Mikhailova N."/>
            <person name="Whitman W.B."/>
            <person name="Woyke T."/>
        </authorList>
    </citation>
    <scope>NUCLEOTIDE SEQUENCE [LARGE SCALE GENOMIC DNA]</scope>
    <source>
        <strain>ATCC BAA-1334 / A3</strain>
    </source>
</reference>
<dbReference type="EC" id="5.4.99.25" evidence="1"/>
<dbReference type="EMBL" id="CP002057">
    <property type="protein sequence ID" value="ADI37102.1"/>
    <property type="molecule type" value="Genomic_DNA"/>
</dbReference>
<dbReference type="SMR" id="D7DQH5"/>
<dbReference type="FunCoup" id="D7DQH5">
    <property type="interactions" value="1"/>
</dbReference>
<dbReference type="STRING" id="456320.Mvol_1447"/>
<dbReference type="KEGG" id="mvo:Mvol_1447"/>
<dbReference type="eggNOG" id="arCOG01015">
    <property type="taxonomic scope" value="Archaea"/>
</dbReference>
<dbReference type="HOGENOM" id="CLU_028780_2_0_2"/>
<dbReference type="InParanoid" id="D7DQH5"/>
<dbReference type="OrthoDB" id="10348at2157"/>
<dbReference type="Proteomes" id="UP000007722">
    <property type="component" value="Chromosome"/>
</dbReference>
<dbReference type="GO" id="GO:0000049">
    <property type="term" value="F:tRNA binding"/>
    <property type="evidence" value="ECO:0007669"/>
    <property type="project" value="InterPro"/>
</dbReference>
<dbReference type="GO" id="GO:0160148">
    <property type="term" value="F:tRNA pseudouridine(55) synthase activity"/>
    <property type="evidence" value="ECO:0007669"/>
    <property type="project" value="UniProtKB-EC"/>
</dbReference>
<dbReference type="GO" id="GO:0031119">
    <property type="term" value="P:tRNA pseudouridine synthesis"/>
    <property type="evidence" value="ECO:0007669"/>
    <property type="project" value="UniProtKB-UniRule"/>
</dbReference>
<dbReference type="FunFam" id="3.30.70.2510:FF:000001">
    <property type="entry name" value="tRNA pseudouridine synthase Pus10"/>
    <property type="match status" value="1"/>
</dbReference>
<dbReference type="Gene3D" id="3.30.70.2510">
    <property type="match status" value="1"/>
</dbReference>
<dbReference type="Gene3D" id="3.30.70.3190">
    <property type="match status" value="1"/>
</dbReference>
<dbReference type="HAMAP" id="MF_01893">
    <property type="entry name" value="Pus10_arch"/>
    <property type="match status" value="1"/>
</dbReference>
<dbReference type="InterPro" id="IPR020103">
    <property type="entry name" value="PsdUridine_synth_cat_dom_sf"/>
</dbReference>
<dbReference type="InterPro" id="IPR005912">
    <property type="entry name" value="Pus10"/>
</dbReference>
<dbReference type="InterPro" id="IPR039894">
    <property type="entry name" value="Pus10-like"/>
</dbReference>
<dbReference type="InterPro" id="IPR048741">
    <property type="entry name" value="Pus10-like_C"/>
</dbReference>
<dbReference type="InterPro" id="IPR055174">
    <property type="entry name" value="Pus10_THUMP_arc"/>
</dbReference>
<dbReference type="InterPro" id="IPR004114">
    <property type="entry name" value="THUMP_dom"/>
</dbReference>
<dbReference type="NCBIfam" id="TIGR01213">
    <property type="entry name" value="pseudo_Pus10arc"/>
    <property type="match status" value="1"/>
</dbReference>
<dbReference type="PANTHER" id="PTHR21568">
    <property type="entry name" value="TRNA PSEUDOURIDINE SYNTHASE PUS10"/>
    <property type="match status" value="1"/>
</dbReference>
<dbReference type="PANTHER" id="PTHR21568:SF0">
    <property type="entry name" value="TRNA PSEUDOURIDINE SYNTHASE PUS10"/>
    <property type="match status" value="1"/>
</dbReference>
<dbReference type="Pfam" id="PF21238">
    <property type="entry name" value="Pus10_C"/>
    <property type="match status" value="1"/>
</dbReference>
<dbReference type="Pfam" id="PF22023">
    <property type="entry name" value="Pus10_THUMP_arc"/>
    <property type="match status" value="1"/>
</dbReference>
<dbReference type="SMART" id="SM00981">
    <property type="entry name" value="THUMP"/>
    <property type="match status" value="1"/>
</dbReference>
<dbReference type="SUPFAM" id="SSF55120">
    <property type="entry name" value="Pseudouridine synthase"/>
    <property type="match status" value="1"/>
</dbReference>
<dbReference type="PROSITE" id="PS51165">
    <property type="entry name" value="THUMP"/>
    <property type="match status" value="1"/>
</dbReference>
<proteinExistence type="inferred from homology"/>
<sequence>MDYENKILQKYNLCNRCYGRIYAKLMRMGNKDRGTSIKTVIAMNFEEKLKDLIEEKNNLIDIISNSQDINENEEIDENTKNNEDTENKADDKSQSNEEKIQEIDEKINIIKENLTLLRKTGLNGIKNEYIIEELLKDDITREENESEENESNIFLTPEQKCPWCKDVFNIQNLEEIADKIVEALSEYEFDRFLIGTRLPKRIKELEKDLETTFNEKNTESLRNEFGRELGKILTKKLEKPVDKETPDIVVMVNPYNQKIYLQINPIFIKGRYRKTKRGIPQSHWDCRSCRGKGCEKCNFTGKQYPTSVEEIIAEPVMNIAKGSGEALHAAGREDIDVKMLGKGRPFVIEVKEPKVRKMDLLKIMDEINKIEGVEVSDLEYGVKNDVRFFKNEPHTKTYCALVSIVDEELENHDFENDKIVELSEKLENLRIDQRTPHRVSHRRADLVRVRNIYKAWCEPIDEKSFKLTVYCDGGLYIKELISGDEGRTKPSISEILDIPCYCKLLTVMEVHDENNPANY</sequence>
<organism>
    <name type="scientific">Methanococcus voltae (strain ATCC BAA-1334 / A3)</name>
    <dbReference type="NCBI Taxonomy" id="456320"/>
    <lineage>
        <taxon>Archaea</taxon>
        <taxon>Methanobacteriati</taxon>
        <taxon>Methanobacteriota</taxon>
        <taxon>Methanomada group</taxon>
        <taxon>Methanococci</taxon>
        <taxon>Methanococcales</taxon>
        <taxon>Methanococcaceae</taxon>
        <taxon>Methanococcus</taxon>
    </lineage>
</organism>
<protein>
    <recommendedName>
        <fullName evidence="1">tRNA pseudouridine synthase Pus10</fullName>
        <ecNumber evidence="1">5.4.99.25</ecNumber>
    </recommendedName>
    <alternativeName>
        <fullName evidence="1">tRNA pseudouridine 54/55 synthase</fullName>
        <shortName evidence="1">Psi54/55 synthase</shortName>
    </alternativeName>
</protein>
<gene>
    <name evidence="1" type="primary">pus10</name>
    <name type="ordered locus">Mvol_1447</name>
</gene>